<organism>
    <name type="scientific">Streptococcus pneumoniae serotype 2 (strain D39 / NCTC 7466)</name>
    <dbReference type="NCBI Taxonomy" id="373153"/>
    <lineage>
        <taxon>Bacteria</taxon>
        <taxon>Bacillati</taxon>
        <taxon>Bacillota</taxon>
        <taxon>Bacilli</taxon>
        <taxon>Lactobacillales</taxon>
        <taxon>Streptococcaceae</taxon>
        <taxon>Streptococcus</taxon>
    </lineage>
</organism>
<dbReference type="EC" id="3.6.1.15" evidence="1"/>
<dbReference type="EC" id="3.6.1.6" evidence="1"/>
<dbReference type="EMBL" id="CP000410">
    <property type="protein sequence ID" value="ABJ54739.1"/>
    <property type="molecule type" value="Genomic_DNA"/>
</dbReference>
<dbReference type="RefSeq" id="WP_000775321.1">
    <property type="nucleotide sequence ID" value="NZ_JAMLJR010000029.1"/>
</dbReference>
<dbReference type="SMR" id="Q04IQ6"/>
<dbReference type="PaxDb" id="373153-SPD_1706"/>
<dbReference type="KEGG" id="spd:SPD_1706"/>
<dbReference type="eggNOG" id="COG3557">
    <property type="taxonomic scope" value="Bacteria"/>
</dbReference>
<dbReference type="HOGENOM" id="CLU_109787_1_0_9"/>
<dbReference type="BioCyc" id="SPNE373153:G1G6V-1842-MONOMER"/>
<dbReference type="Proteomes" id="UP000001452">
    <property type="component" value="Chromosome"/>
</dbReference>
<dbReference type="GO" id="GO:0000287">
    <property type="term" value="F:magnesium ion binding"/>
    <property type="evidence" value="ECO:0007669"/>
    <property type="project" value="UniProtKB-UniRule"/>
</dbReference>
<dbReference type="GO" id="GO:0017110">
    <property type="term" value="F:nucleoside diphosphate phosphatase activity"/>
    <property type="evidence" value="ECO:0007669"/>
    <property type="project" value="UniProtKB-UniRule"/>
</dbReference>
<dbReference type="GO" id="GO:0017111">
    <property type="term" value="F:ribonucleoside triphosphate phosphatase activity"/>
    <property type="evidence" value="ECO:0007669"/>
    <property type="project" value="UniProtKB-UniRule"/>
</dbReference>
<dbReference type="Gene3D" id="2.40.380.10">
    <property type="entry name" value="FomD-like"/>
    <property type="match status" value="1"/>
</dbReference>
<dbReference type="HAMAP" id="MF_01568">
    <property type="entry name" value="Ntdp"/>
    <property type="match status" value="1"/>
</dbReference>
<dbReference type="InterPro" id="IPR007295">
    <property type="entry name" value="DUF402"/>
</dbReference>
<dbReference type="InterPro" id="IPR035930">
    <property type="entry name" value="FomD-like_sf"/>
</dbReference>
<dbReference type="InterPro" id="IPR050212">
    <property type="entry name" value="Ntdp-like"/>
</dbReference>
<dbReference type="InterPro" id="IPR016882">
    <property type="entry name" value="SA1684"/>
</dbReference>
<dbReference type="NCBIfam" id="NF010183">
    <property type="entry name" value="PRK13662.1"/>
    <property type="match status" value="1"/>
</dbReference>
<dbReference type="PANTHER" id="PTHR39159">
    <property type="match status" value="1"/>
</dbReference>
<dbReference type="PANTHER" id="PTHR39159:SF1">
    <property type="entry name" value="UPF0374 PROTEIN YGAC"/>
    <property type="match status" value="1"/>
</dbReference>
<dbReference type="Pfam" id="PF04167">
    <property type="entry name" value="DUF402"/>
    <property type="match status" value="1"/>
</dbReference>
<dbReference type="PIRSF" id="PIRSF028345">
    <property type="entry name" value="UCP028345"/>
    <property type="match status" value="1"/>
</dbReference>
<dbReference type="SUPFAM" id="SSF159234">
    <property type="entry name" value="FomD-like"/>
    <property type="match status" value="1"/>
</dbReference>
<keyword id="KW-0378">Hydrolase</keyword>
<keyword id="KW-0460">Magnesium</keyword>
<keyword id="KW-0479">Metal-binding</keyword>
<keyword id="KW-1185">Reference proteome</keyword>
<gene>
    <name type="ordered locus">SPD_1706</name>
</gene>
<evidence type="ECO:0000255" key="1">
    <source>
        <dbReference type="HAMAP-Rule" id="MF_01568"/>
    </source>
</evidence>
<comment type="function">
    <text evidence="1">Has nucleoside phosphatase activity towards nucleoside triphosphates and nucleoside diphosphates.</text>
</comment>
<comment type="catalytic activity">
    <reaction evidence="1">
        <text>a ribonucleoside 5'-triphosphate + H2O = a ribonucleoside 5'-diphosphate + phosphate + H(+)</text>
        <dbReference type="Rhea" id="RHEA:23680"/>
        <dbReference type="ChEBI" id="CHEBI:15377"/>
        <dbReference type="ChEBI" id="CHEBI:15378"/>
        <dbReference type="ChEBI" id="CHEBI:43474"/>
        <dbReference type="ChEBI" id="CHEBI:57930"/>
        <dbReference type="ChEBI" id="CHEBI:61557"/>
        <dbReference type="EC" id="3.6.1.15"/>
    </reaction>
</comment>
<comment type="catalytic activity">
    <reaction evidence="1">
        <text>a ribonucleoside 5'-diphosphate + H2O = a ribonucleoside 5'-phosphate + phosphate + H(+)</text>
        <dbReference type="Rhea" id="RHEA:36799"/>
        <dbReference type="ChEBI" id="CHEBI:15377"/>
        <dbReference type="ChEBI" id="CHEBI:15378"/>
        <dbReference type="ChEBI" id="CHEBI:43474"/>
        <dbReference type="ChEBI" id="CHEBI:57930"/>
        <dbReference type="ChEBI" id="CHEBI:58043"/>
        <dbReference type="EC" id="3.6.1.6"/>
    </reaction>
</comment>
<comment type="cofactor">
    <cofactor evidence="1">
        <name>Mg(2+)</name>
        <dbReference type="ChEBI" id="CHEBI:18420"/>
    </cofactor>
</comment>
<comment type="similarity">
    <text evidence="1">Belongs to the Ntdp family.</text>
</comment>
<accession>Q04IQ6</accession>
<feature type="chain" id="PRO_1000069109" description="Nucleoside triphosphate/diphosphate phosphatase">
    <location>
        <begin position="1"/>
        <end position="177"/>
    </location>
</feature>
<feature type="active site" description="Proton donor" evidence="1">
    <location>
        <position position="23"/>
    </location>
</feature>
<feature type="binding site" evidence="1">
    <location>
        <position position="87"/>
    </location>
    <ligand>
        <name>Mg(2+)</name>
        <dbReference type="ChEBI" id="CHEBI:18420"/>
        <label>1</label>
    </ligand>
</feature>
<feature type="binding site" evidence="1">
    <location>
        <position position="103"/>
    </location>
    <ligand>
        <name>Mg(2+)</name>
        <dbReference type="ChEBI" id="CHEBI:18420"/>
        <label>1</label>
    </ligand>
</feature>
<feature type="binding site" evidence="1">
    <location>
        <position position="105"/>
    </location>
    <ligand>
        <name>Mg(2+)</name>
        <dbReference type="ChEBI" id="CHEBI:18420"/>
        <label>2</label>
    </ligand>
</feature>
<feature type="binding site" evidence="1">
    <location>
        <position position="107"/>
    </location>
    <ligand>
        <name>Mg(2+)</name>
        <dbReference type="ChEBI" id="CHEBI:18420"/>
        <label>1</label>
    </ligand>
</feature>
<feature type="binding site" evidence="1">
    <location>
        <position position="107"/>
    </location>
    <ligand>
        <name>Mg(2+)</name>
        <dbReference type="ChEBI" id="CHEBI:18420"/>
        <label>2</label>
    </ligand>
</feature>
<feature type="binding site" evidence="1">
    <location>
        <position position="120"/>
    </location>
    <ligand>
        <name>Mg(2+)</name>
        <dbReference type="ChEBI" id="CHEBI:18420"/>
        <label>2</label>
    </ligand>
</feature>
<feature type="binding site" evidence="1">
    <location>
        <position position="123"/>
    </location>
    <ligand>
        <name>Mg(2+)</name>
        <dbReference type="ChEBI" id="CHEBI:18420"/>
        <label>2</label>
    </ligand>
</feature>
<reference key="1">
    <citation type="journal article" date="2007" name="J. Bacteriol.">
        <title>Genome sequence of Avery's virulent serotype 2 strain D39 of Streptococcus pneumoniae and comparison with that of unencapsulated laboratory strain R6.</title>
        <authorList>
            <person name="Lanie J.A."/>
            <person name="Ng W.-L."/>
            <person name="Kazmierczak K.M."/>
            <person name="Andrzejewski T.M."/>
            <person name="Davidsen T.M."/>
            <person name="Wayne K.J."/>
            <person name="Tettelin H."/>
            <person name="Glass J.I."/>
            <person name="Winkler M.E."/>
        </authorList>
    </citation>
    <scope>NUCLEOTIDE SEQUENCE [LARGE SCALE GENOMIC DNA]</scope>
    <source>
        <strain>D39 / NCTC 7466</strain>
    </source>
</reference>
<sequence length="177" mass="21338">MKLPKEGDFITIQSYKHDGSLHRTWRDTMVLKTTENAIIGVNDHTLVTESDGRRWVTREPAIVYFHKKYWFNIIAMIRDNGTSYYCNMASPYYLDEEALKYIDYDLDVKIFTDGEKRLLDVEEYERHKRKMNYSDDLDYILKEHVKILVDWINNGRGPFSEAYVNIWYKRYVELKNR</sequence>
<proteinExistence type="inferred from homology"/>
<protein>
    <recommendedName>
        <fullName evidence="1">Nucleoside triphosphate/diphosphate phosphatase</fullName>
        <ecNumber evidence="1">3.6.1.15</ecNumber>
        <ecNumber evidence="1">3.6.1.6</ecNumber>
    </recommendedName>
</protein>
<name>NTDP_STRP2</name>